<protein>
    <recommendedName>
        <fullName>26S proteasome regulatory subunit 4</fullName>
        <shortName>P26s4</shortName>
    </recommendedName>
    <alternativeName>
        <fullName>26S proteasome AAA-ATPase subunit RPT2</fullName>
    </alternativeName>
    <alternativeName>
        <fullName>Proteasome 26S subunit ATPase 1</fullName>
    </alternativeName>
</protein>
<feature type="initiator methionine" description="Removed" evidence="2">
    <location>
        <position position="1"/>
    </location>
</feature>
<feature type="chain" id="PRO_0000084679" description="26S proteasome regulatory subunit 4">
    <location>
        <begin position="2"/>
        <end position="440"/>
    </location>
</feature>
<feature type="region of interest" description="Disordered" evidence="4">
    <location>
        <begin position="1"/>
        <end position="49"/>
    </location>
</feature>
<feature type="region of interest" description="Disordered" evidence="4">
    <location>
        <begin position="84"/>
        <end position="104"/>
    </location>
</feature>
<feature type="compositionally biased region" description="Gly residues" evidence="4">
    <location>
        <begin position="1"/>
        <end position="13"/>
    </location>
</feature>
<feature type="compositionally biased region" description="Basic and acidic residues" evidence="4">
    <location>
        <begin position="14"/>
        <end position="26"/>
    </location>
</feature>
<feature type="compositionally biased region" description="Basic and acidic residues" evidence="4">
    <location>
        <begin position="86"/>
        <end position="103"/>
    </location>
</feature>
<feature type="binding site" evidence="3">
    <location>
        <begin position="226"/>
        <end position="233"/>
    </location>
    <ligand>
        <name>ATP</name>
        <dbReference type="ChEBI" id="CHEBI:30616"/>
    </ligand>
</feature>
<feature type="modified residue" description="Phosphoserine" evidence="2">
    <location>
        <position position="4"/>
    </location>
</feature>
<feature type="modified residue" description="Phosphothreonine" evidence="2">
    <location>
        <position position="53"/>
    </location>
</feature>
<feature type="modified residue" description="N6-acetyllysine" evidence="2">
    <location>
        <position position="258"/>
    </location>
</feature>
<feature type="modified residue" description="Phosphothreonine" evidence="2">
    <location>
        <position position="434"/>
    </location>
</feature>
<feature type="modified residue" description="Phosphotyrosine" evidence="2">
    <location>
        <position position="439"/>
    </location>
</feature>
<feature type="lipid moiety-binding region" description="N-myristoyl glycine" evidence="2">
    <location>
        <position position="2"/>
    </location>
</feature>
<feature type="cross-link" description="Glycyl lysine isopeptide (Lys-Gly) (interchain with G-Cter in ubiquitin)" evidence="2">
    <location>
        <position position="237"/>
    </location>
</feature>
<accession>P62193</accession>
<accession>P49014</accession>
<accession>Q03527</accession>
<accession>Q96AZ3</accession>
<proteinExistence type="evidence at protein level"/>
<organism>
    <name type="scientific">Rattus norvegicus</name>
    <name type="common">Rat</name>
    <dbReference type="NCBI Taxonomy" id="10116"/>
    <lineage>
        <taxon>Eukaryota</taxon>
        <taxon>Metazoa</taxon>
        <taxon>Chordata</taxon>
        <taxon>Craniata</taxon>
        <taxon>Vertebrata</taxon>
        <taxon>Euteleostomi</taxon>
        <taxon>Mammalia</taxon>
        <taxon>Eutheria</taxon>
        <taxon>Euarchontoglires</taxon>
        <taxon>Glires</taxon>
        <taxon>Rodentia</taxon>
        <taxon>Myomorpha</taxon>
        <taxon>Muroidea</taxon>
        <taxon>Muridae</taxon>
        <taxon>Murinae</taxon>
        <taxon>Rattus</taxon>
    </lineage>
</organism>
<reference key="1">
    <citation type="journal article" date="1996" name="Biochem. Biophys. Res. Commun.">
        <title>Structures of the rat proteasomal ATPases: determination of highly conserved structural motifs and rules for their spacing.</title>
        <authorList>
            <person name="Makino Y."/>
            <person name="Yogosawa S."/>
            <person name="Kanemaki M."/>
            <person name="Yoshida T."/>
            <person name="Yamano K."/>
            <person name="Kishimoto T."/>
            <person name="Moncollin V."/>
            <person name="Egly J.-M."/>
            <person name="Muramatsu M."/>
            <person name="Tamura T."/>
        </authorList>
    </citation>
    <scope>NUCLEOTIDE SEQUENCE [MRNA]</scope>
    <source>
        <strain>Sprague-Dawley</strain>
        <tissue>Liver</tissue>
    </source>
</reference>
<reference key="2">
    <citation type="journal article" date="2004" name="Genome Res.">
        <title>The status, quality, and expansion of the NIH full-length cDNA project: the Mammalian Gene Collection (MGC).</title>
        <authorList>
            <consortium name="The MGC Project Team"/>
        </authorList>
    </citation>
    <scope>NUCLEOTIDE SEQUENCE [LARGE SCALE MRNA]</scope>
    <source>
        <tissue>Pituitary</tissue>
    </source>
</reference>
<name>PRS4_RAT</name>
<evidence type="ECO:0000250" key="1"/>
<evidence type="ECO:0000250" key="2">
    <source>
        <dbReference type="UniProtKB" id="P62191"/>
    </source>
</evidence>
<evidence type="ECO:0000255" key="3"/>
<evidence type="ECO:0000256" key="4">
    <source>
        <dbReference type="SAM" id="MobiDB-lite"/>
    </source>
</evidence>
<evidence type="ECO:0000305" key="5"/>
<sequence>MGQSQSGGHGPGGGKKDDKDKKKKYEPPVPTRVGKKKKKTKGPDAASKLPLVTPHTQCRLKLLKLERIKDYLLMEEEFIRNQEQMKPLEEKQEEERSKVDDLRGTPMSVGTLEEIIDDNHAIVSTSVGSEHYVSILSFVDKDLLEPGCSVLLNHKVHAVIGVLMDDTDPLVTVMKVEKAPQETYADIGGLDNQIQEIKESVELPLTHPEYYEEMGIKPPKGVILYGPPGTGKTLLAKAVANQTSATFLRVVGSELIQKYLGDGPKLVRELFRVAEEHAPSIVFIDEIDAIGTKRYDSNSGGEREIQRTMLELLNQLDGFDSRGDVKVIMATNRIETLDPALIRPGRIDRKIEFPLPDEKTKKRIFQIHTSRMTLADDVTLDDLIMAKDDLSGADIKAICTEAGLMALRERRMKVTNEDFKKSKENVLYKKQEGTPEGLYL</sequence>
<dbReference type="EMBL" id="D50696">
    <property type="protein sequence ID" value="BAA09341.1"/>
    <property type="molecule type" value="mRNA"/>
</dbReference>
<dbReference type="EMBL" id="BC063157">
    <property type="protein sequence ID" value="AAH63157.1"/>
    <property type="molecule type" value="mRNA"/>
</dbReference>
<dbReference type="RefSeq" id="NP_476464.1">
    <property type="nucleotide sequence ID" value="NM_057123.2"/>
</dbReference>
<dbReference type="PDB" id="6EPC">
    <property type="method" value="EM"/>
    <property type="resolution" value="12.30 A"/>
    <property type="chains" value="I=1-440"/>
</dbReference>
<dbReference type="PDB" id="6EPD">
    <property type="method" value="EM"/>
    <property type="resolution" value="15.40 A"/>
    <property type="chains" value="I=1-440"/>
</dbReference>
<dbReference type="PDB" id="6EPE">
    <property type="method" value="EM"/>
    <property type="resolution" value="12.80 A"/>
    <property type="chains" value="I=1-440"/>
</dbReference>
<dbReference type="PDB" id="6EPF">
    <property type="method" value="EM"/>
    <property type="resolution" value="11.80 A"/>
    <property type="chains" value="I=1-440"/>
</dbReference>
<dbReference type="PDBsum" id="6EPC"/>
<dbReference type="PDBsum" id="6EPD"/>
<dbReference type="PDBsum" id="6EPE"/>
<dbReference type="PDBsum" id="6EPF"/>
<dbReference type="EMDB" id="EMD-3913"/>
<dbReference type="EMDB" id="EMD-3914"/>
<dbReference type="EMDB" id="EMD-3915"/>
<dbReference type="EMDB" id="EMD-3916"/>
<dbReference type="SMR" id="P62193"/>
<dbReference type="BioGRID" id="250710">
    <property type="interactions" value="8"/>
</dbReference>
<dbReference type="ComplexPortal" id="CPX-8962">
    <property type="entry name" value="19S proteasome regulatory complex"/>
</dbReference>
<dbReference type="ComplexPortal" id="CPX-8965">
    <property type="entry name" value="30S proteasome complex"/>
</dbReference>
<dbReference type="FunCoup" id="P62193">
    <property type="interactions" value="3154"/>
</dbReference>
<dbReference type="IntAct" id="P62193">
    <property type="interactions" value="9"/>
</dbReference>
<dbReference type="STRING" id="10116.ENSRNOP00000005329"/>
<dbReference type="iPTMnet" id="P62193"/>
<dbReference type="PhosphoSitePlus" id="P62193"/>
<dbReference type="jPOST" id="P62193"/>
<dbReference type="PaxDb" id="10116-ENSRNOP00000005329"/>
<dbReference type="GeneID" id="117263"/>
<dbReference type="KEGG" id="rno:117263"/>
<dbReference type="UCSC" id="RGD:621097">
    <property type="organism name" value="rat"/>
</dbReference>
<dbReference type="AGR" id="RGD:621097"/>
<dbReference type="CTD" id="5700"/>
<dbReference type="RGD" id="621097">
    <property type="gene designation" value="Psmc1"/>
</dbReference>
<dbReference type="VEuPathDB" id="HostDB:ENSRNOG00000003951"/>
<dbReference type="eggNOG" id="KOG0726">
    <property type="taxonomic scope" value="Eukaryota"/>
</dbReference>
<dbReference type="HOGENOM" id="CLU_000688_2_3_1"/>
<dbReference type="InParanoid" id="P62193"/>
<dbReference type="OrthoDB" id="15436at9989"/>
<dbReference type="PhylomeDB" id="P62193"/>
<dbReference type="TreeFam" id="TF106226"/>
<dbReference type="Reactome" id="R-RNO-1169091">
    <property type="pathway name" value="Activation of NF-kappaB in B cells"/>
</dbReference>
<dbReference type="Reactome" id="R-RNO-1234176">
    <property type="pathway name" value="Oxygen-dependent proline hydroxylation of Hypoxia-inducible Factor Alpha"/>
</dbReference>
<dbReference type="Reactome" id="R-RNO-1236978">
    <property type="pathway name" value="Cross-presentation of soluble exogenous antigens (endosomes)"/>
</dbReference>
<dbReference type="Reactome" id="R-RNO-174084">
    <property type="pathway name" value="Autodegradation of Cdh1 by Cdh1:APC/C"/>
</dbReference>
<dbReference type="Reactome" id="R-RNO-174113">
    <property type="pathway name" value="SCF-beta-TrCP mediated degradation of Emi1"/>
</dbReference>
<dbReference type="Reactome" id="R-RNO-174154">
    <property type="pathway name" value="APC/C:Cdc20 mediated degradation of Securin"/>
</dbReference>
<dbReference type="Reactome" id="R-RNO-174178">
    <property type="pathway name" value="APC/C:Cdh1 mediated degradation of Cdc20 and other APC/C:Cdh1 targeted proteins in late mitosis/early G1"/>
</dbReference>
<dbReference type="Reactome" id="R-RNO-174184">
    <property type="pathway name" value="Cdc20:Phospho-APC/C mediated degradation of Cyclin A"/>
</dbReference>
<dbReference type="Reactome" id="R-RNO-187577">
    <property type="pathway name" value="SCF(Skp2)-mediated degradation of p27/p21"/>
</dbReference>
<dbReference type="Reactome" id="R-RNO-195253">
    <property type="pathway name" value="Degradation of beta-catenin by the destruction complex"/>
</dbReference>
<dbReference type="Reactome" id="R-RNO-2467813">
    <property type="pathway name" value="Separation of Sister Chromatids"/>
</dbReference>
<dbReference type="Reactome" id="R-RNO-349425">
    <property type="pathway name" value="Autodegradation of the E3 ubiquitin ligase COP1"/>
</dbReference>
<dbReference type="Reactome" id="R-RNO-350562">
    <property type="pathway name" value="Regulation of ornithine decarboxylase (ODC)"/>
</dbReference>
<dbReference type="Reactome" id="R-RNO-382556">
    <property type="pathway name" value="ABC-family proteins mediated transport"/>
</dbReference>
<dbReference type="Reactome" id="R-RNO-450408">
    <property type="pathway name" value="AUF1 (hnRNP D0) binds and destabilizes mRNA"/>
</dbReference>
<dbReference type="Reactome" id="R-RNO-4608870">
    <property type="pathway name" value="Asymmetric localization of PCP proteins"/>
</dbReference>
<dbReference type="Reactome" id="R-RNO-4641257">
    <property type="pathway name" value="Degradation of AXIN"/>
</dbReference>
<dbReference type="Reactome" id="R-RNO-4641258">
    <property type="pathway name" value="Degradation of DVL"/>
</dbReference>
<dbReference type="Reactome" id="R-RNO-532668">
    <property type="pathway name" value="N-glycan trimming in the ER and Calnexin/Calreticulin cycle"/>
</dbReference>
<dbReference type="Reactome" id="R-RNO-5358346">
    <property type="pathway name" value="Hedgehog ligand biogenesis"/>
</dbReference>
<dbReference type="Reactome" id="R-RNO-5607761">
    <property type="pathway name" value="Dectin-1 mediated noncanonical NF-kB signaling"/>
</dbReference>
<dbReference type="Reactome" id="R-RNO-5610780">
    <property type="pathway name" value="Degradation of GLI1 by the proteasome"/>
</dbReference>
<dbReference type="Reactome" id="R-RNO-5610785">
    <property type="pathway name" value="GLI3 is processed to GLI3R by the proteasome"/>
</dbReference>
<dbReference type="Reactome" id="R-RNO-5632684">
    <property type="pathway name" value="Hedgehog 'on' state"/>
</dbReference>
<dbReference type="Reactome" id="R-RNO-5658442">
    <property type="pathway name" value="Regulation of RAS by GAPs"/>
</dbReference>
<dbReference type="Reactome" id="R-RNO-5668541">
    <property type="pathway name" value="TNFR2 non-canonical NF-kB pathway"/>
</dbReference>
<dbReference type="Reactome" id="R-RNO-5676590">
    <property type="pathway name" value="NIK--&gt;noncanonical NF-kB signaling"/>
</dbReference>
<dbReference type="Reactome" id="R-RNO-5687128">
    <property type="pathway name" value="MAPK6/MAPK4 signaling"/>
</dbReference>
<dbReference type="Reactome" id="R-RNO-5689603">
    <property type="pathway name" value="UCH proteinases"/>
</dbReference>
<dbReference type="Reactome" id="R-RNO-5689880">
    <property type="pathway name" value="Ub-specific processing proteases"/>
</dbReference>
<dbReference type="Reactome" id="R-RNO-68867">
    <property type="pathway name" value="Assembly of the pre-replicative complex"/>
</dbReference>
<dbReference type="Reactome" id="R-RNO-68949">
    <property type="pathway name" value="Orc1 removal from chromatin"/>
</dbReference>
<dbReference type="Reactome" id="R-RNO-69017">
    <property type="pathway name" value="CDK-mediated phosphorylation and removal of Cdc6"/>
</dbReference>
<dbReference type="Reactome" id="R-RNO-69481">
    <property type="pathway name" value="G2/M Checkpoints"/>
</dbReference>
<dbReference type="Reactome" id="R-RNO-69601">
    <property type="pathway name" value="Ubiquitin Mediated Degradation of Phosphorylated Cdc25A"/>
</dbReference>
<dbReference type="Reactome" id="R-RNO-75815">
    <property type="pathway name" value="Ubiquitin-dependent degradation of Cyclin D"/>
</dbReference>
<dbReference type="Reactome" id="R-RNO-8852276">
    <property type="pathway name" value="The role of GTSE1 in G2/M progression after G2 checkpoint"/>
</dbReference>
<dbReference type="Reactome" id="R-RNO-8854050">
    <property type="pathway name" value="FBXL7 down-regulates AURKA during mitotic entry and in early mitosis"/>
</dbReference>
<dbReference type="Reactome" id="R-RNO-8939236">
    <property type="pathway name" value="RUNX1 regulates transcription of genes involved in differentiation of HSCs"/>
</dbReference>
<dbReference type="Reactome" id="R-RNO-8941858">
    <property type="pathway name" value="Regulation of RUNX3 expression and activity"/>
</dbReference>
<dbReference type="Reactome" id="R-RNO-8948751">
    <property type="pathway name" value="Regulation of PTEN stability and activity"/>
</dbReference>
<dbReference type="Reactome" id="R-RNO-8951664">
    <property type="pathway name" value="Neddylation"/>
</dbReference>
<dbReference type="Reactome" id="R-RNO-9755511">
    <property type="pathway name" value="KEAP1-NFE2L2 pathway"/>
</dbReference>
<dbReference type="Reactome" id="R-RNO-9762114">
    <property type="pathway name" value="GSK3B and BTRC:CUL1-mediated-degradation of NFE2L2"/>
</dbReference>
<dbReference type="Reactome" id="R-RNO-983168">
    <property type="pathway name" value="Antigen processing: Ubiquitination &amp; Proteasome degradation"/>
</dbReference>
<dbReference type="Reactome" id="R-RNO-9907900">
    <property type="pathway name" value="Proteasome assembly"/>
</dbReference>
<dbReference type="PRO" id="PR:P62193"/>
<dbReference type="Proteomes" id="UP000002494">
    <property type="component" value="Chromosome 6"/>
</dbReference>
<dbReference type="Bgee" id="ENSRNOG00000003951">
    <property type="expression patterns" value="Expressed in cerebellum and 20 other cell types or tissues"/>
</dbReference>
<dbReference type="GO" id="GO:0005737">
    <property type="term" value="C:cytoplasm"/>
    <property type="evidence" value="ECO:0007669"/>
    <property type="project" value="UniProtKB-SubCell"/>
</dbReference>
<dbReference type="GO" id="GO:0016020">
    <property type="term" value="C:membrane"/>
    <property type="evidence" value="ECO:0007669"/>
    <property type="project" value="UniProtKB-SubCell"/>
</dbReference>
<dbReference type="GO" id="GO:0005634">
    <property type="term" value="C:nucleus"/>
    <property type="evidence" value="ECO:0007669"/>
    <property type="project" value="UniProtKB-SubCell"/>
</dbReference>
<dbReference type="GO" id="GO:0022624">
    <property type="term" value="C:proteasome accessory complex"/>
    <property type="evidence" value="ECO:0000250"/>
    <property type="project" value="UniProtKB"/>
</dbReference>
<dbReference type="GO" id="GO:0000502">
    <property type="term" value="C:proteasome complex"/>
    <property type="evidence" value="ECO:0000266"/>
    <property type="project" value="RGD"/>
</dbReference>
<dbReference type="GO" id="GO:0005838">
    <property type="term" value="C:proteasome regulatory particle"/>
    <property type="evidence" value="ECO:0000266"/>
    <property type="project" value="RGD"/>
</dbReference>
<dbReference type="GO" id="GO:0008540">
    <property type="term" value="C:proteasome regulatory particle, base subcomplex"/>
    <property type="evidence" value="ECO:0000318"/>
    <property type="project" value="GO_Central"/>
</dbReference>
<dbReference type="GO" id="GO:0005524">
    <property type="term" value="F:ATP binding"/>
    <property type="evidence" value="ECO:0007669"/>
    <property type="project" value="UniProtKB-KW"/>
</dbReference>
<dbReference type="GO" id="GO:0016887">
    <property type="term" value="F:ATP hydrolysis activity"/>
    <property type="evidence" value="ECO:0000304"/>
    <property type="project" value="RGD"/>
</dbReference>
<dbReference type="GO" id="GO:0036402">
    <property type="term" value="F:proteasome-activating activity"/>
    <property type="evidence" value="ECO:0000318"/>
    <property type="project" value="GO_Central"/>
</dbReference>
<dbReference type="GO" id="GO:0017025">
    <property type="term" value="F:TBP-class protein binding"/>
    <property type="evidence" value="ECO:0000353"/>
    <property type="project" value="RGD"/>
</dbReference>
<dbReference type="GO" id="GO:0043161">
    <property type="term" value="P:proteasome-mediated ubiquitin-dependent protein catabolic process"/>
    <property type="evidence" value="ECO:0000318"/>
    <property type="project" value="GO_Central"/>
</dbReference>
<dbReference type="CDD" id="cd19502">
    <property type="entry name" value="RecA-like_PAN_like"/>
    <property type="match status" value="1"/>
</dbReference>
<dbReference type="FunFam" id="2.40.50.140:FF:000067">
    <property type="entry name" value="26S protease regulatory subunit 4"/>
    <property type="match status" value="1"/>
</dbReference>
<dbReference type="FunFam" id="1.10.8.60:FF:000007">
    <property type="entry name" value="26S proteasome regulatory subunit 4"/>
    <property type="match status" value="1"/>
</dbReference>
<dbReference type="FunFam" id="3.40.50.300:FF:000039">
    <property type="entry name" value="26S proteasome regulatory subunit 4"/>
    <property type="match status" value="1"/>
</dbReference>
<dbReference type="Gene3D" id="1.10.8.60">
    <property type="match status" value="1"/>
</dbReference>
<dbReference type="Gene3D" id="2.40.50.140">
    <property type="entry name" value="Nucleic acid-binding proteins"/>
    <property type="match status" value="1"/>
</dbReference>
<dbReference type="Gene3D" id="3.40.50.300">
    <property type="entry name" value="P-loop containing nucleotide triphosphate hydrolases"/>
    <property type="match status" value="1"/>
</dbReference>
<dbReference type="InterPro" id="IPR050221">
    <property type="entry name" value="26S_Proteasome_ATPase"/>
</dbReference>
<dbReference type="InterPro" id="IPR003593">
    <property type="entry name" value="AAA+_ATPase"/>
</dbReference>
<dbReference type="InterPro" id="IPR041569">
    <property type="entry name" value="AAA_lid_3"/>
</dbReference>
<dbReference type="InterPro" id="IPR003959">
    <property type="entry name" value="ATPase_AAA_core"/>
</dbReference>
<dbReference type="InterPro" id="IPR003960">
    <property type="entry name" value="ATPase_AAA_CS"/>
</dbReference>
<dbReference type="InterPro" id="IPR012340">
    <property type="entry name" value="NA-bd_OB-fold"/>
</dbReference>
<dbReference type="InterPro" id="IPR027417">
    <property type="entry name" value="P-loop_NTPase"/>
</dbReference>
<dbReference type="InterPro" id="IPR032501">
    <property type="entry name" value="Prot_ATP_ID_OB_2nd"/>
</dbReference>
<dbReference type="PANTHER" id="PTHR23073">
    <property type="entry name" value="26S PROTEASOME REGULATORY SUBUNIT"/>
    <property type="match status" value="1"/>
</dbReference>
<dbReference type="Pfam" id="PF00004">
    <property type="entry name" value="AAA"/>
    <property type="match status" value="1"/>
</dbReference>
<dbReference type="Pfam" id="PF17862">
    <property type="entry name" value="AAA_lid_3"/>
    <property type="match status" value="1"/>
</dbReference>
<dbReference type="Pfam" id="PF16450">
    <property type="entry name" value="Prot_ATP_ID_OB_C"/>
    <property type="match status" value="1"/>
</dbReference>
<dbReference type="SMART" id="SM00382">
    <property type="entry name" value="AAA"/>
    <property type="match status" value="1"/>
</dbReference>
<dbReference type="SUPFAM" id="SSF52540">
    <property type="entry name" value="P-loop containing nucleoside triphosphate hydrolases"/>
    <property type="match status" value="1"/>
</dbReference>
<dbReference type="PROSITE" id="PS00674">
    <property type="entry name" value="AAA"/>
    <property type="match status" value="1"/>
</dbReference>
<comment type="function">
    <text evidence="2">Component of the 26S proteasome, a multiprotein complex involved in the ATP-dependent degradation of ubiquitinated proteins. This complex plays a key role in the maintenance of protein homeostasis by removing misfolded or damaged proteins, which could impair cellular functions, and by removing proteins whose functions are no longer required. Therefore, the proteasome participates in numerous cellular processes, including cell cycle progression, apoptosis, or DNA damage repair. PSMC1 belongs to the heterohexameric ring of AAA (ATPases associated with diverse cellular activities) proteins that unfolds ubiquitinated target proteins that are concurrently translocated into a proteolytic chamber and degraded into peptides.</text>
</comment>
<comment type="subunit">
    <text evidence="2">Component of the 19S proteasome regulatory particle complex. The 26S proteasome consists of a 20S core particle (CP) and two 19S regulatory subunits (RP). The regulatory particle is made of a lid composed of 9 subunits, a base containing 6 ATPases including PSMC1 and few additional components. Interacts with SCA7. Interacts with NGLY1. Interacts with PAAF1.</text>
</comment>
<comment type="subcellular location">
    <subcellularLocation>
        <location evidence="1">Cytoplasm</location>
    </subcellularLocation>
    <subcellularLocation>
        <location evidence="1">Nucleus</location>
    </subcellularLocation>
    <subcellularLocation>
        <location evidence="2">Membrane</location>
        <topology evidence="2">Lipid-anchor</topology>
    </subcellularLocation>
</comment>
<comment type="similarity">
    <text evidence="5">Belongs to the AAA ATPase family.</text>
</comment>
<gene>
    <name type="primary">Psmc1</name>
</gene>
<keyword id="KW-0002">3D-structure</keyword>
<keyword id="KW-0007">Acetylation</keyword>
<keyword id="KW-0067">ATP-binding</keyword>
<keyword id="KW-0963">Cytoplasm</keyword>
<keyword id="KW-1017">Isopeptide bond</keyword>
<keyword id="KW-0449">Lipoprotein</keyword>
<keyword id="KW-0472">Membrane</keyword>
<keyword id="KW-0519">Myristate</keyword>
<keyword id="KW-0547">Nucleotide-binding</keyword>
<keyword id="KW-0539">Nucleus</keyword>
<keyword id="KW-0597">Phosphoprotein</keyword>
<keyword id="KW-0647">Proteasome</keyword>
<keyword id="KW-1185">Reference proteome</keyword>
<keyword id="KW-0832">Ubl conjugation</keyword>